<sequence>MTIAPDPVDLAARLIACKSVTPSDDGAMNIMADALKSAGFTVHLLTKGQAPDGPVTNLIAIRGEGYPHLAYAGHSDVVPAGQGWSSDPFTPTIKDGYLVGRGAVDMKSSVAAFIAAASRYTEHKGTLSLLITGDEEGPATFGTPAIIEWLNEQSIKPDYCLVGEPTSVERLGDTVKNGRRGSVNMWIEVEGIQGHVAYPDRACNPIPVLARIISDLESWVLDKGDQWFQPSNLEVTSIECDNKATNVIPALAKAQLNIRFNALHKGAELVDSLKKRVAAIDPKARVKAAISGEAFVTEEGVLTDTISAAIAKNTGITPSLSTSGGTSDARFLTKLCPVVEFGLVNATMHKVDEKASVEDIRQLSRIDEDIIKSFLG</sequence>
<dbReference type="EC" id="3.5.1.18" evidence="1"/>
<dbReference type="EMBL" id="AF300471">
    <property type="protein sequence ID" value="AAG42411.1"/>
    <property type="molecule type" value="Genomic_DNA"/>
</dbReference>
<dbReference type="EMBL" id="AE008692">
    <property type="protein sequence ID" value="AAV90256.1"/>
    <property type="molecule type" value="Genomic_DNA"/>
</dbReference>
<dbReference type="RefSeq" id="WP_011241382.1">
    <property type="nucleotide sequence ID" value="NZ_CP035711.1"/>
</dbReference>
<dbReference type="SMR" id="Q5NM04"/>
<dbReference type="STRING" id="264203.ZMO1632"/>
<dbReference type="KEGG" id="zmo:ZMO1632"/>
<dbReference type="eggNOG" id="COG0624">
    <property type="taxonomic scope" value="Bacteria"/>
</dbReference>
<dbReference type="HOGENOM" id="CLU_021802_4_0_5"/>
<dbReference type="UniPathway" id="UPA00034">
    <property type="reaction ID" value="UER00021"/>
</dbReference>
<dbReference type="Proteomes" id="UP000001173">
    <property type="component" value="Chromosome"/>
</dbReference>
<dbReference type="GO" id="GO:0008777">
    <property type="term" value="F:acetylornithine deacetylase activity"/>
    <property type="evidence" value="ECO:0007669"/>
    <property type="project" value="TreeGrafter"/>
</dbReference>
<dbReference type="GO" id="GO:0050897">
    <property type="term" value="F:cobalt ion binding"/>
    <property type="evidence" value="ECO:0007669"/>
    <property type="project" value="UniProtKB-UniRule"/>
</dbReference>
<dbReference type="GO" id="GO:0009014">
    <property type="term" value="F:succinyl-diaminopimelate desuccinylase activity"/>
    <property type="evidence" value="ECO:0007669"/>
    <property type="project" value="UniProtKB-UniRule"/>
</dbReference>
<dbReference type="GO" id="GO:0008270">
    <property type="term" value="F:zinc ion binding"/>
    <property type="evidence" value="ECO:0007669"/>
    <property type="project" value="UniProtKB-UniRule"/>
</dbReference>
<dbReference type="GO" id="GO:0019877">
    <property type="term" value="P:diaminopimelate biosynthetic process"/>
    <property type="evidence" value="ECO:0007669"/>
    <property type="project" value="UniProtKB-UniRule"/>
</dbReference>
<dbReference type="GO" id="GO:0006526">
    <property type="term" value="P:L-arginine biosynthetic process"/>
    <property type="evidence" value="ECO:0007669"/>
    <property type="project" value="TreeGrafter"/>
</dbReference>
<dbReference type="GO" id="GO:0009089">
    <property type="term" value="P:lysine biosynthetic process via diaminopimelate"/>
    <property type="evidence" value="ECO:0007669"/>
    <property type="project" value="UniProtKB-UniRule"/>
</dbReference>
<dbReference type="CDD" id="cd03891">
    <property type="entry name" value="M20_DapE_proteobac"/>
    <property type="match status" value="1"/>
</dbReference>
<dbReference type="Gene3D" id="3.40.630.10">
    <property type="entry name" value="Zn peptidases"/>
    <property type="match status" value="2"/>
</dbReference>
<dbReference type="HAMAP" id="MF_01690">
    <property type="entry name" value="DapE"/>
    <property type="match status" value="1"/>
</dbReference>
<dbReference type="InterPro" id="IPR001261">
    <property type="entry name" value="ArgE/DapE_CS"/>
</dbReference>
<dbReference type="InterPro" id="IPR036264">
    <property type="entry name" value="Bact_exopeptidase_dim_dom"/>
</dbReference>
<dbReference type="InterPro" id="IPR005941">
    <property type="entry name" value="DapE_proteobac"/>
</dbReference>
<dbReference type="InterPro" id="IPR002933">
    <property type="entry name" value="Peptidase_M20"/>
</dbReference>
<dbReference type="InterPro" id="IPR011650">
    <property type="entry name" value="Peptidase_M20_dimer"/>
</dbReference>
<dbReference type="InterPro" id="IPR050072">
    <property type="entry name" value="Peptidase_M20A"/>
</dbReference>
<dbReference type="NCBIfam" id="TIGR01246">
    <property type="entry name" value="dapE_proteo"/>
    <property type="match status" value="1"/>
</dbReference>
<dbReference type="NCBIfam" id="NF009557">
    <property type="entry name" value="PRK13009.1"/>
    <property type="match status" value="1"/>
</dbReference>
<dbReference type="PANTHER" id="PTHR43808">
    <property type="entry name" value="ACETYLORNITHINE DEACETYLASE"/>
    <property type="match status" value="1"/>
</dbReference>
<dbReference type="PANTHER" id="PTHR43808:SF31">
    <property type="entry name" value="N-ACETYL-L-CITRULLINE DEACETYLASE"/>
    <property type="match status" value="1"/>
</dbReference>
<dbReference type="Pfam" id="PF07687">
    <property type="entry name" value="M20_dimer"/>
    <property type="match status" value="1"/>
</dbReference>
<dbReference type="Pfam" id="PF01546">
    <property type="entry name" value="Peptidase_M20"/>
    <property type="match status" value="1"/>
</dbReference>
<dbReference type="SUPFAM" id="SSF55031">
    <property type="entry name" value="Bacterial exopeptidase dimerisation domain"/>
    <property type="match status" value="1"/>
</dbReference>
<dbReference type="SUPFAM" id="SSF53187">
    <property type="entry name" value="Zn-dependent exopeptidases"/>
    <property type="match status" value="1"/>
</dbReference>
<dbReference type="PROSITE" id="PS00759">
    <property type="entry name" value="ARGE_DAPE_CPG2_2"/>
    <property type="match status" value="1"/>
</dbReference>
<comment type="function">
    <text evidence="1">Catalyzes the hydrolysis of N-succinyl-L,L-diaminopimelic acid (SDAP), forming succinate and LL-2,6-diaminopimelate (DAP), an intermediate involved in the bacterial biosynthesis of lysine and meso-diaminopimelic acid, an essential component of bacterial cell walls.</text>
</comment>
<comment type="catalytic activity">
    <reaction evidence="1">
        <text>N-succinyl-(2S,6S)-2,6-diaminopimelate + H2O = (2S,6S)-2,6-diaminopimelate + succinate</text>
        <dbReference type="Rhea" id="RHEA:22608"/>
        <dbReference type="ChEBI" id="CHEBI:15377"/>
        <dbReference type="ChEBI" id="CHEBI:30031"/>
        <dbReference type="ChEBI" id="CHEBI:57609"/>
        <dbReference type="ChEBI" id="CHEBI:58087"/>
        <dbReference type="EC" id="3.5.1.18"/>
    </reaction>
</comment>
<comment type="cofactor">
    <cofactor evidence="1">
        <name>Zn(2+)</name>
        <dbReference type="ChEBI" id="CHEBI:29105"/>
    </cofactor>
    <cofactor evidence="1">
        <name>Co(2+)</name>
        <dbReference type="ChEBI" id="CHEBI:48828"/>
    </cofactor>
    <text evidence="1">Binds 2 Zn(2+) or Co(2+) ions per subunit.</text>
</comment>
<comment type="pathway">
    <text evidence="1">Amino-acid biosynthesis; L-lysine biosynthesis via DAP pathway; LL-2,6-diaminopimelate from (S)-tetrahydrodipicolinate (succinylase route): step 3/3.</text>
</comment>
<comment type="subunit">
    <text evidence="1">Homodimer.</text>
</comment>
<comment type="similarity">
    <text evidence="1">Belongs to the peptidase M20A family. DapE subfamily.</text>
</comment>
<gene>
    <name evidence="1" type="primary">dapE</name>
    <name type="ordered locus">ZMO1632</name>
</gene>
<reference key="1">
    <citation type="submission" date="2000-08" db="EMBL/GenBank/DDBJ databases">
        <title>Zymomonas mobilis ZM4 fosmid clone 43E12 complete sequence.</title>
        <authorList>
            <person name="Shin I.S."/>
            <person name="Kang H.S."/>
        </authorList>
    </citation>
    <scope>NUCLEOTIDE SEQUENCE [GENOMIC DNA]</scope>
    <source>
        <strain>ATCC 31821 / ZM4 / CP4</strain>
    </source>
</reference>
<reference key="2">
    <citation type="journal article" date="2005" name="Nat. Biotechnol.">
        <title>The genome sequence of the ethanologenic bacterium Zymomonas mobilis ZM4.</title>
        <authorList>
            <person name="Seo J.-S."/>
            <person name="Chong H."/>
            <person name="Park H.S."/>
            <person name="Yoon K.-O."/>
            <person name="Jung C."/>
            <person name="Kim J.J."/>
            <person name="Hong J.H."/>
            <person name="Kim H."/>
            <person name="Kim J.-H."/>
            <person name="Kil J.-I."/>
            <person name="Park C.J."/>
            <person name="Oh H.-M."/>
            <person name="Lee J.-S."/>
            <person name="Jin S.-J."/>
            <person name="Um H.-W."/>
            <person name="Lee H.-J."/>
            <person name="Oh S.-J."/>
            <person name="Kim J.Y."/>
            <person name="Kang H.L."/>
            <person name="Lee S.Y."/>
            <person name="Lee K.J."/>
            <person name="Kang H.S."/>
        </authorList>
    </citation>
    <scope>NUCLEOTIDE SEQUENCE [LARGE SCALE GENOMIC DNA]</scope>
    <source>
        <strain>ATCC 31821 / ZM4 / CP4</strain>
    </source>
</reference>
<organism>
    <name type="scientific">Zymomonas mobilis subsp. mobilis (strain ATCC 31821 / ZM4 / CP4)</name>
    <dbReference type="NCBI Taxonomy" id="264203"/>
    <lineage>
        <taxon>Bacteria</taxon>
        <taxon>Pseudomonadati</taxon>
        <taxon>Pseudomonadota</taxon>
        <taxon>Alphaproteobacteria</taxon>
        <taxon>Sphingomonadales</taxon>
        <taxon>Zymomonadaceae</taxon>
        <taxon>Zymomonas</taxon>
    </lineage>
</organism>
<feature type="chain" id="PRO_0000375803" description="Succinyl-diaminopimelate desuccinylase">
    <location>
        <begin position="1"/>
        <end position="376"/>
    </location>
</feature>
<feature type="active site" evidence="1">
    <location>
        <position position="76"/>
    </location>
</feature>
<feature type="active site" description="Proton acceptor" evidence="1">
    <location>
        <position position="135"/>
    </location>
</feature>
<feature type="binding site" evidence="1">
    <location>
        <position position="74"/>
    </location>
    <ligand>
        <name>Zn(2+)</name>
        <dbReference type="ChEBI" id="CHEBI:29105"/>
        <label>1</label>
    </ligand>
</feature>
<feature type="binding site" evidence="1">
    <location>
        <position position="105"/>
    </location>
    <ligand>
        <name>Zn(2+)</name>
        <dbReference type="ChEBI" id="CHEBI:29105"/>
        <label>1</label>
    </ligand>
</feature>
<feature type="binding site" evidence="1">
    <location>
        <position position="105"/>
    </location>
    <ligand>
        <name>Zn(2+)</name>
        <dbReference type="ChEBI" id="CHEBI:29105"/>
        <label>2</label>
    </ligand>
</feature>
<feature type="binding site" evidence="1">
    <location>
        <position position="136"/>
    </location>
    <ligand>
        <name>Zn(2+)</name>
        <dbReference type="ChEBI" id="CHEBI:29105"/>
        <label>2</label>
    </ligand>
</feature>
<feature type="binding site" evidence="1">
    <location>
        <position position="164"/>
    </location>
    <ligand>
        <name>Zn(2+)</name>
        <dbReference type="ChEBI" id="CHEBI:29105"/>
        <label>1</label>
    </ligand>
</feature>
<feature type="binding site" evidence="1">
    <location>
        <position position="349"/>
    </location>
    <ligand>
        <name>Zn(2+)</name>
        <dbReference type="ChEBI" id="CHEBI:29105"/>
        <label>2</label>
    </ligand>
</feature>
<feature type="sequence conflict" description="In Ref. 1; AAG42411." evidence="2" ref="1">
    <original>TKGQ</original>
    <variation>PKVE</variation>
    <location>
        <begin position="46"/>
        <end position="49"/>
    </location>
</feature>
<evidence type="ECO:0000255" key="1">
    <source>
        <dbReference type="HAMAP-Rule" id="MF_01690"/>
    </source>
</evidence>
<evidence type="ECO:0000305" key="2"/>
<protein>
    <recommendedName>
        <fullName evidence="1">Succinyl-diaminopimelate desuccinylase</fullName>
        <shortName evidence="1">SDAP desuccinylase</shortName>
        <ecNumber evidence="1">3.5.1.18</ecNumber>
    </recommendedName>
    <alternativeName>
        <fullName evidence="1">N-succinyl-LL-2,6-diaminoheptanedioate amidohydrolase</fullName>
    </alternativeName>
</protein>
<accession>Q5NM04</accession>
<accession>Q9EZ94</accession>
<keyword id="KW-0028">Amino-acid biosynthesis</keyword>
<keyword id="KW-0170">Cobalt</keyword>
<keyword id="KW-0220">Diaminopimelate biosynthesis</keyword>
<keyword id="KW-0378">Hydrolase</keyword>
<keyword id="KW-0457">Lysine biosynthesis</keyword>
<keyword id="KW-0479">Metal-binding</keyword>
<keyword id="KW-1185">Reference proteome</keyword>
<keyword id="KW-0862">Zinc</keyword>
<proteinExistence type="inferred from homology"/>
<name>DAPE_ZYMMO</name>